<evidence type="ECO:0000255" key="1">
    <source>
        <dbReference type="PROSITE-ProRule" id="PRU00502"/>
    </source>
</evidence>
<evidence type="ECO:0000255" key="2">
    <source>
        <dbReference type="PROSITE-ProRule" id="PRU10092"/>
    </source>
</evidence>
<evidence type="ECO:0000269" key="3">
    <source>
    </source>
</evidence>
<evidence type="ECO:0000269" key="4">
    <source>
    </source>
</evidence>
<evidence type="ECO:0000303" key="5">
    <source>
    </source>
</evidence>
<evidence type="ECO:0000305" key="6"/>
<evidence type="ECO:0000312" key="7">
    <source>
        <dbReference type="Araport" id="AT5G10790"/>
    </source>
</evidence>
<evidence type="ECO:0000312" key="8">
    <source>
        <dbReference type="EMBL" id="CAB96834.1"/>
    </source>
</evidence>
<gene>
    <name evidence="5" type="primary">UBP22</name>
    <name evidence="7" type="ordered locus">At5g10790</name>
    <name evidence="8" type="ORF">T30N20_60</name>
</gene>
<keyword id="KW-0378">Hydrolase</keyword>
<keyword id="KW-0479">Metal-binding</keyword>
<keyword id="KW-0539">Nucleus</keyword>
<keyword id="KW-0645">Protease</keyword>
<keyword id="KW-1185">Reference proteome</keyword>
<keyword id="KW-0788">Thiol protease</keyword>
<keyword id="KW-0833">Ubl conjugation pathway</keyword>
<keyword id="KW-0862">Zinc</keyword>
<keyword id="KW-0863">Zinc-finger</keyword>
<proteinExistence type="evidence at protein level"/>
<sequence length="557" mass="63518">MSARISFLKNPDPCNHLSDYKLRYGTDGYKSFNNLFRCFNDARIKIKLQGIDIPRCSYCSVYQKRLYICLICRSISCSSHILLHTQLNKGHDIAIDVERSELYCCACIDQVYDSEFDEVVVSKQLFGLGMSVKSGADVVAVRSNKKRRLDSQLIIGSNFLVSPRDRREKWTFPLGLRGLNNLGSTCFMNAVLQALVHAPPLRNFWLSGQHNRDLCPRRTMGLLCLPCDLDVIFSAMFSGDRTPYSPAHLLYSWWQHSTNLATYEQQDSHEFFISLLDRIHENEGKSKCLYQDNEECQCITHKAFSGLLRSDVTCTTCGSTSTTYDPFIDISLTLDSMNGFSPADCRKNRYSGGPSVNAIMPTLSGCLDFFTRSEKLGPDQKLNCQSCGEKRESSKQMSIRRLPLLLCLHVKRFEHSLTRKTSRKIDSYLQYPFRLNMSPYLSSSIIGKRFGNRIFAFDGEGEYDSSSSSSPSAEFEIFAVVTHKGMLESGHYVTYLRLKGLWYRCDDAWINEVEEEVVRGCECYMLFYAQETVIQKAHKELSYQVISMADAFPFADC</sequence>
<reference key="1">
    <citation type="journal article" date="2000" name="Plant Physiol.">
        <title>The ubiquitin-specific protease family from Arabidopsis. AtUBP1 and 2 are required for the resistance to the amino acid analog canavanine.</title>
        <authorList>
            <person name="Yan N."/>
            <person name="Doelling J.H."/>
            <person name="Falbel T.G."/>
            <person name="Durski A.M."/>
            <person name="Vierstra R.D."/>
        </authorList>
    </citation>
    <scope>NUCLEOTIDE SEQUENCE [MRNA]</scope>
    <scope>GENE FAMILY ORGANIZATION</scope>
    <scope>NOMENCLATURE</scope>
    <source>
        <strain>cv. Columbia</strain>
    </source>
</reference>
<reference key="2">
    <citation type="journal article" date="2000" name="Nature">
        <title>Sequence and analysis of chromosome 5 of the plant Arabidopsis thaliana.</title>
        <authorList>
            <person name="Tabata S."/>
            <person name="Kaneko T."/>
            <person name="Nakamura Y."/>
            <person name="Kotani H."/>
            <person name="Kato T."/>
            <person name="Asamizu E."/>
            <person name="Miyajima N."/>
            <person name="Sasamoto S."/>
            <person name="Kimura T."/>
            <person name="Hosouchi T."/>
            <person name="Kawashima K."/>
            <person name="Kohara M."/>
            <person name="Matsumoto M."/>
            <person name="Matsuno A."/>
            <person name="Muraki A."/>
            <person name="Nakayama S."/>
            <person name="Nakazaki N."/>
            <person name="Naruo K."/>
            <person name="Okumura S."/>
            <person name="Shinpo S."/>
            <person name="Takeuchi C."/>
            <person name="Wada T."/>
            <person name="Watanabe A."/>
            <person name="Yamada M."/>
            <person name="Yasuda M."/>
            <person name="Sato S."/>
            <person name="de la Bastide M."/>
            <person name="Huang E."/>
            <person name="Spiegel L."/>
            <person name="Gnoj L."/>
            <person name="O'Shaughnessy A."/>
            <person name="Preston R."/>
            <person name="Habermann K."/>
            <person name="Murray J."/>
            <person name="Johnson D."/>
            <person name="Rohlfing T."/>
            <person name="Nelson J."/>
            <person name="Stoneking T."/>
            <person name="Pepin K."/>
            <person name="Spieth J."/>
            <person name="Sekhon M."/>
            <person name="Armstrong J."/>
            <person name="Becker M."/>
            <person name="Belter E."/>
            <person name="Cordum H."/>
            <person name="Cordes M."/>
            <person name="Courtney L."/>
            <person name="Courtney W."/>
            <person name="Dante M."/>
            <person name="Du H."/>
            <person name="Edwards J."/>
            <person name="Fryman J."/>
            <person name="Haakensen B."/>
            <person name="Lamar E."/>
            <person name="Latreille P."/>
            <person name="Leonard S."/>
            <person name="Meyer R."/>
            <person name="Mulvaney E."/>
            <person name="Ozersky P."/>
            <person name="Riley A."/>
            <person name="Strowmatt C."/>
            <person name="Wagner-McPherson C."/>
            <person name="Wollam A."/>
            <person name="Yoakum M."/>
            <person name="Bell M."/>
            <person name="Dedhia N."/>
            <person name="Parnell L."/>
            <person name="Shah R."/>
            <person name="Rodriguez M."/>
            <person name="Hoon See L."/>
            <person name="Vil D."/>
            <person name="Baker J."/>
            <person name="Kirchoff K."/>
            <person name="Toth K."/>
            <person name="King L."/>
            <person name="Bahret A."/>
            <person name="Miller B."/>
            <person name="Marra M.A."/>
            <person name="Martienssen R."/>
            <person name="McCombie W.R."/>
            <person name="Wilson R.K."/>
            <person name="Murphy G."/>
            <person name="Bancroft I."/>
            <person name="Volckaert G."/>
            <person name="Wambutt R."/>
            <person name="Duesterhoeft A."/>
            <person name="Stiekema W."/>
            <person name="Pohl T."/>
            <person name="Entian K.-D."/>
            <person name="Terryn N."/>
            <person name="Hartley N."/>
            <person name="Bent E."/>
            <person name="Johnson S."/>
            <person name="Langham S.-A."/>
            <person name="McCullagh B."/>
            <person name="Robben J."/>
            <person name="Grymonprez B."/>
            <person name="Zimmermann W."/>
            <person name="Ramsperger U."/>
            <person name="Wedler H."/>
            <person name="Balke K."/>
            <person name="Wedler E."/>
            <person name="Peters S."/>
            <person name="van Staveren M."/>
            <person name="Dirkse W."/>
            <person name="Mooijman P."/>
            <person name="Klein Lankhorst R."/>
            <person name="Weitzenegger T."/>
            <person name="Bothe G."/>
            <person name="Rose M."/>
            <person name="Hauf J."/>
            <person name="Berneiser S."/>
            <person name="Hempel S."/>
            <person name="Feldpausch M."/>
            <person name="Lamberth S."/>
            <person name="Villarroel R."/>
            <person name="Gielen J."/>
            <person name="Ardiles W."/>
            <person name="Bents O."/>
            <person name="Lemcke K."/>
            <person name="Kolesov G."/>
            <person name="Mayer K.F.X."/>
            <person name="Rudd S."/>
            <person name="Schoof H."/>
            <person name="Schueller C."/>
            <person name="Zaccaria P."/>
            <person name="Mewes H.-W."/>
            <person name="Bevan M."/>
            <person name="Fransz P.F."/>
        </authorList>
    </citation>
    <scope>NUCLEOTIDE SEQUENCE [LARGE SCALE GENOMIC DNA]</scope>
    <source>
        <strain>cv. Columbia</strain>
    </source>
</reference>
<reference key="3">
    <citation type="journal article" date="2017" name="Plant J.">
        <title>Araport11: a complete reannotation of the Arabidopsis thaliana reference genome.</title>
        <authorList>
            <person name="Cheng C.Y."/>
            <person name="Krishnakumar V."/>
            <person name="Chan A.P."/>
            <person name="Thibaud-Nissen F."/>
            <person name="Schobel S."/>
            <person name="Town C.D."/>
        </authorList>
    </citation>
    <scope>GENOME REANNOTATION</scope>
    <source>
        <strain>cv. Columbia</strain>
    </source>
</reference>
<reference key="4">
    <citation type="journal article" date="2018" name="J. Mol. Biol.">
        <title>The adaptor protein ENY2 is a component of the deubiquitination module of the Arabidopsis SAGA transcriptional co-activator complex but not of the TREX-2 complex.</title>
        <authorList>
            <person name="Pfab A."/>
            <person name="Bruckmann A."/>
            <person name="Nazet J."/>
            <person name="Merkl R."/>
            <person name="Grasser K.D."/>
        </authorList>
    </citation>
    <scope>IDENTIFICATION BY MASS SPECTROMETRY</scope>
    <scope>SUBUNIT</scope>
    <scope>INTERACTION WITH SGF11</scope>
</reference>
<reference key="5">
    <citation type="journal article" date="2018" name="Elife">
        <title>DET1-mediated degradation of a SAGA-like deubiquitination module controls H2Bub homeostasis.</title>
        <authorList>
            <person name="Nassrallah A."/>
            <person name="Rougee M."/>
            <person name="Bourbousse C."/>
            <person name="Drevensek S."/>
            <person name="Fonseca S."/>
            <person name="Iniesto E."/>
            <person name="Ait-Mohamed O."/>
            <person name="Deton-Cabanillas A.F."/>
            <person name="Zabulon G."/>
            <person name="Ahmed I."/>
            <person name="Stroebel D."/>
            <person name="Masson V."/>
            <person name="Lombard B."/>
            <person name="Eeckhout D."/>
            <person name="Gevaert K."/>
            <person name="Loew D."/>
            <person name="Genovesio A."/>
            <person name="Breyton C."/>
            <person name="de Jaeger G."/>
            <person name="Bowler C."/>
            <person name="Rubio V."/>
            <person name="Barneche F."/>
        </authorList>
    </citation>
    <scope>FUNCTION</scope>
    <scope>IDENTIFICATION BY MASS SPECTROMETRY</scope>
    <scope>SUBUNIT</scope>
    <scope>INTERACTION WITH SGF11</scope>
    <scope>SUBCELLULAR LOCATION</scope>
</reference>
<feature type="chain" id="PRO_0000313048" description="Ubiquitin C-terminal hydrolase 22">
    <location>
        <begin position="1"/>
        <end position="557"/>
    </location>
</feature>
<feature type="domain" description="USP">
    <location>
        <begin position="177"/>
        <end position="531"/>
    </location>
</feature>
<feature type="zinc finger region" description="UBP-type; degenerate" evidence="1">
    <location>
        <begin position="36"/>
        <end position="130"/>
    </location>
</feature>
<feature type="active site" description="Nucleophile" evidence="2">
    <location>
        <position position="186"/>
    </location>
</feature>
<feature type="active site" description="Proton acceptor" evidence="2">
    <location>
        <position position="491"/>
    </location>
</feature>
<feature type="binding site" evidence="1">
    <location>
        <position position="56"/>
    </location>
    <ligand>
        <name>Zn(2+)</name>
        <dbReference type="ChEBI" id="CHEBI:29105"/>
        <label>1</label>
    </ligand>
</feature>
<feature type="binding site" evidence="1">
    <location>
        <position position="59"/>
    </location>
    <ligand>
        <name>Zn(2+)</name>
        <dbReference type="ChEBI" id="CHEBI:29105"/>
        <label>1</label>
    </ligand>
</feature>
<feature type="binding site" evidence="1">
    <location>
        <position position="69"/>
    </location>
    <ligand>
        <name>Zn(2+)</name>
        <dbReference type="ChEBI" id="CHEBI:29105"/>
        <label>2</label>
    </ligand>
</feature>
<feature type="binding site" evidence="1">
    <location>
        <position position="72"/>
    </location>
    <ligand>
        <name>Zn(2+)</name>
        <dbReference type="ChEBI" id="CHEBI:29105"/>
        <label>2</label>
    </ligand>
</feature>
<feature type="binding site" evidence="1">
    <location>
        <position position="77"/>
    </location>
    <ligand>
        <name>Zn(2+)</name>
        <dbReference type="ChEBI" id="CHEBI:29105"/>
        <label>1</label>
    </ligand>
</feature>
<feature type="binding site" evidence="1">
    <location>
        <position position="80"/>
    </location>
    <ligand>
        <name>Zn(2+)</name>
        <dbReference type="ChEBI" id="CHEBI:29105"/>
        <label>1</label>
    </ligand>
</feature>
<feature type="binding site" evidence="1">
    <location>
        <position position="84"/>
    </location>
    <ligand>
        <name>Zn(2+)</name>
        <dbReference type="ChEBI" id="CHEBI:29105"/>
        <label>2</label>
    </ligand>
</feature>
<feature type="binding site" evidence="1">
    <location>
        <position position="91"/>
    </location>
    <ligand>
        <name>Zn(2+)</name>
        <dbReference type="ChEBI" id="CHEBI:29105"/>
        <label>2</label>
    </ligand>
</feature>
<feature type="sequence conflict" description="In Ref. 1; AAG42760." evidence="6" ref="1">
    <original>V</original>
    <variation>A</variation>
    <location>
        <position position="111"/>
    </location>
</feature>
<feature type="sequence conflict" description="In Ref. 1; AAG42760." evidence="6" ref="1">
    <original>V</original>
    <variation>I</variation>
    <location>
        <position position="231"/>
    </location>
</feature>
<feature type="sequence conflict" description="In Ref. 1; AAG42760." evidence="6" ref="1">
    <original>S</original>
    <variation>F</variation>
    <location>
        <position position="416"/>
    </location>
</feature>
<comment type="function">
    <text evidence="3 4">Component of a deubiquitination module (DUB module) that specifically deubiquinates monoubiquinated histone H2B (H2Bub) (PubMed:29588169, PubMed:30192741). Does not seem to be a component of the TREX-2 complex (PubMed:29588169). Seems to act independently of the SAGA multiprotein complex (PubMed:30192741). The DUB module is responsible for the major H2Bub deubiquitinase activity in Arabidopsis (PubMed:30192741).</text>
</comment>
<comment type="catalytic activity">
    <reaction evidence="6">
        <text>Thiol-dependent hydrolysis of ester, thioester, amide, peptide and isopeptide bonds formed by the C-terminal Gly of ubiquitin (a 76-residue protein attached to proteins as an intracellular targeting signal).</text>
        <dbReference type="EC" id="3.4.19.12"/>
    </reaction>
</comment>
<comment type="subunit">
    <text evidence="3 4">Component of a deubiquitination module (DUB module) formed by ENY2, SGF11, and UBP22 in Arabidopsis (PubMed:29588169, PubMed:30192741). Interacts directly with SGF11, but not with ENY2 (PubMed:29588169, PubMed:30192741).</text>
</comment>
<comment type="subcellular location">
    <subcellularLocation>
        <location evidence="4">Nucleus</location>
        <location evidence="4">Nucleoplasm</location>
    </subcellularLocation>
    <text evidence="4">Displays a rather patchy distribution forming a punctuated pattern in the euchromatin (PubMed:30192741). Does not localize in the heterochromatic chromocenters or nucleolus (PubMed:30192741).</text>
</comment>
<comment type="similarity">
    <text evidence="6">Belongs to the peptidase C19 family.</text>
</comment>
<organism>
    <name type="scientific">Arabidopsis thaliana</name>
    <name type="common">Mouse-ear cress</name>
    <dbReference type="NCBI Taxonomy" id="3702"/>
    <lineage>
        <taxon>Eukaryota</taxon>
        <taxon>Viridiplantae</taxon>
        <taxon>Streptophyta</taxon>
        <taxon>Embryophyta</taxon>
        <taxon>Tracheophyta</taxon>
        <taxon>Spermatophyta</taxon>
        <taxon>Magnoliopsida</taxon>
        <taxon>eudicotyledons</taxon>
        <taxon>Gunneridae</taxon>
        <taxon>Pentapetalae</taxon>
        <taxon>rosids</taxon>
        <taxon>malvids</taxon>
        <taxon>Brassicales</taxon>
        <taxon>Brassicaceae</taxon>
        <taxon>Camelineae</taxon>
        <taxon>Arabidopsis</taxon>
    </lineage>
</organism>
<accession>Q9LEW0</accession>
<accession>Q9FPS5</accession>
<name>UBP22_ARATH</name>
<protein>
    <recommendedName>
        <fullName evidence="6">Ubiquitin C-terminal hydrolase 22</fullName>
        <ecNumber evidence="6">3.4.19.12</ecNumber>
    </recommendedName>
    <alternativeName>
        <fullName evidence="6">Deubiquitinating enzyme 22</fullName>
        <shortName evidence="5">AtUBP22</shortName>
    </alternativeName>
    <alternativeName>
        <fullName evidence="6">Ubiquitin thioesterase 22</fullName>
    </alternativeName>
    <alternativeName>
        <fullName evidence="6">Ubiquitin-specific-processing protease 22</fullName>
    </alternativeName>
</protein>
<dbReference type="EC" id="3.4.19.12" evidence="6"/>
<dbReference type="EMBL" id="AF302670">
    <property type="protein sequence ID" value="AAG42760.1"/>
    <property type="molecule type" value="mRNA"/>
</dbReference>
<dbReference type="EMBL" id="AL365234">
    <property type="protein sequence ID" value="CAB96834.1"/>
    <property type="molecule type" value="Genomic_DNA"/>
</dbReference>
<dbReference type="EMBL" id="CP002688">
    <property type="protein sequence ID" value="AED91597.1"/>
    <property type="molecule type" value="Genomic_DNA"/>
</dbReference>
<dbReference type="PIR" id="T50788">
    <property type="entry name" value="T50788"/>
</dbReference>
<dbReference type="RefSeq" id="NP_568239.1">
    <property type="nucleotide sequence ID" value="NM_121117.2"/>
</dbReference>
<dbReference type="SMR" id="Q9LEW0"/>
<dbReference type="FunCoup" id="Q9LEW0">
    <property type="interactions" value="2755"/>
</dbReference>
<dbReference type="STRING" id="3702.Q9LEW0"/>
<dbReference type="MEROPS" id="C19.A11"/>
<dbReference type="PaxDb" id="3702-AT5G10790.1"/>
<dbReference type="EnsemblPlants" id="AT5G10790.1">
    <property type="protein sequence ID" value="AT5G10790.1"/>
    <property type="gene ID" value="AT5G10790"/>
</dbReference>
<dbReference type="GeneID" id="830946"/>
<dbReference type="Gramene" id="AT5G10790.1">
    <property type="protein sequence ID" value="AT5G10790.1"/>
    <property type="gene ID" value="AT5G10790"/>
</dbReference>
<dbReference type="KEGG" id="ath:AT5G10790"/>
<dbReference type="Araport" id="AT5G10790"/>
<dbReference type="TAIR" id="AT5G10790">
    <property type="gene designation" value="UBP22"/>
</dbReference>
<dbReference type="eggNOG" id="KOG1867">
    <property type="taxonomic scope" value="Eukaryota"/>
</dbReference>
<dbReference type="HOGENOM" id="CLU_008279_11_0_1"/>
<dbReference type="InParanoid" id="Q9LEW0"/>
<dbReference type="PhylomeDB" id="Q9LEW0"/>
<dbReference type="PRO" id="PR:Q9LEW0"/>
<dbReference type="Proteomes" id="UP000006548">
    <property type="component" value="Chromosome 5"/>
</dbReference>
<dbReference type="ExpressionAtlas" id="Q9LEW0">
    <property type="expression patterns" value="baseline and differential"/>
</dbReference>
<dbReference type="GO" id="GO:0005654">
    <property type="term" value="C:nucleoplasm"/>
    <property type="evidence" value="ECO:0007669"/>
    <property type="project" value="UniProtKB-SubCell"/>
</dbReference>
<dbReference type="GO" id="GO:0070461">
    <property type="term" value="C:SAGA-type complex"/>
    <property type="evidence" value="ECO:0000353"/>
    <property type="project" value="TAIR"/>
</dbReference>
<dbReference type="GO" id="GO:0004843">
    <property type="term" value="F:cysteine-type deubiquitinase activity"/>
    <property type="evidence" value="ECO:0007669"/>
    <property type="project" value="UniProtKB-EC"/>
</dbReference>
<dbReference type="GO" id="GO:0008270">
    <property type="term" value="F:zinc ion binding"/>
    <property type="evidence" value="ECO:0007669"/>
    <property type="project" value="UniProtKB-KW"/>
</dbReference>
<dbReference type="GO" id="GO:0016579">
    <property type="term" value="P:protein deubiquitination"/>
    <property type="evidence" value="ECO:0007669"/>
    <property type="project" value="InterPro"/>
</dbReference>
<dbReference type="GO" id="GO:0006508">
    <property type="term" value="P:proteolysis"/>
    <property type="evidence" value="ECO:0007669"/>
    <property type="project" value="UniProtKB-KW"/>
</dbReference>
<dbReference type="CDD" id="cd02660">
    <property type="entry name" value="Peptidase_C19D"/>
    <property type="match status" value="1"/>
</dbReference>
<dbReference type="FunFam" id="3.30.40.10:FF:000584">
    <property type="entry name" value="Ubiquitinyl hydrolase 1"/>
    <property type="match status" value="1"/>
</dbReference>
<dbReference type="FunFam" id="3.90.70.10:FF:000089">
    <property type="entry name" value="Ubiquitinyl hydrolase 1"/>
    <property type="match status" value="1"/>
</dbReference>
<dbReference type="Gene3D" id="3.90.70.10">
    <property type="entry name" value="Cysteine proteinases"/>
    <property type="match status" value="1"/>
</dbReference>
<dbReference type="Gene3D" id="3.30.40.10">
    <property type="entry name" value="Zinc/RING finger domain, C3HC4 (zinc finger)"/>
    <property type="match status" value="1"/>
</dbReference>
<dbReference type="InterPro" id="IPR038765">
    <property type="entry name" value="Papain-like_cys_pep_sf"/>
</dbReference>
<dbReference type="InterPro" id="IPR001394">
    <property type="entry name" value="Peptidase_C19_UCH"/>
</dbReference>
<dbReference type="InterPro" id="IPR050185">
    <property type="entry name" value="Ub_carboxyl-term_hydrolase"/>
</dbReference>
<dbReference type="InterPro" id="IPR018200">
    <property type="entry name" value="USP_CS"/>
</dbReference>
<dbReference type="InterPro" id="IPR028889">
    <property type="entry name" value="USP_dom"/>
</dbReference>
<dbReference type="InterPro" id="IPR013083">
    <property type="entry name" value="Znf_RING/FYVE/PHD"/>
</dbReference>
<dbReference type="InterPro" id="IPR001607">
    <property type="entry name" value="Znf_UBP"/>
</dbReference>
<dbReference type="PANTHER" id="PTHR21646:SF49">
    <property type="entry name" value="UBIQUITIN C-TERMINAL HYDROLASE 22"/>
    <property type="match status" value="1"/>
</dbReference>
<dbReference type="PANTHER" id="PTHR21646">
    <property type="entry name" value="UBIQUITIN CARBOXYL-TERMINAL HYDROLASE"/>
    <property type="match status" value="1"/>
</dbReference>
<dbReference type="Pfam" id="PF00443">
    <property type="entry name" value="UCH"/>
    <property type="match status" value="1"/>
</dbReference>
<dbReference type="Pfam" id="PF02148">
    <property type="entry name" value="zf-UBP"/>
    <property type="match status" value="1"/>
</dbReference>
<dbReference type="SUPFAM" id="SSF54001">
    <property type="entry name" value="Cysteine proteinases"/>
    <property type="match status" value="1"/>
</dbReference>
<dbReference type="SUPFAM" id="SSF57850">
    <property type="entry name" value="RING/U-box"/>
    <property type="match status" value="1"/>
</dbReference>
<dbReference type="PROSITE" id="PS00972">
    <property type="entry name" value="USP_1"/>
    <property type="match status" value="1"/>
</dbReference>
<dbReference type="PROSITE" id="PS50235">
    <property type="entry name" value="USP_3"/>
    <property type="match status" value="1"/>
</dbReference>
<dbReference type="PROSITE" id="PS50271">
    <property type="entry name" value="ZF_UBP"/>
    <property type="match status" value="1"/>
</dbReference>